<organism>
    <name type="scientific">Thermoanaerobacter pseudethanolicus (strain ATCC 33223 / 39E)</name>
    <name type="common">Clostridium thermohydrosulfuricum</name>
    <dbReference type="NCBI Taxonomy" id="340099"/>
    <lineage>
        <taxon>Bacteria</taxon>
        <taxon>Bacillati</taxon>
        <taxon>Bacillota</taxon>
        <taxon>Clostridia</taxon>
        <taxon>Thermoanaerobacterales</taxon>
        <taxon>Thermoanaerobacteraceae</taxon>
        <taxon>Thermoanaerobacter</taxon>
    </lineage>
</organism>
<feature type="chain" id="PRO_1000089777" description="Recombination protein RecR">
    <location>
        <begin position="1"/>
        <end position="199"/>
    </location>
</feature>
<feature type="domain" description="Toprim" evidence="1">
    <location>
        <begin position="81"/>
        <end position="176"/>
    </location>
</feature>
<feature type="zinc finger region" description="C4-type" evidence="1">
    <location>
        <begin position="58"/>
        <end position="73"/>
    </location>
</feature>
<accession>B0K800</accession>
<proteinExistence type="inferred from homology"/>
<protein>
    <recommendedName>
        <fullName evidence="1">Recombination protein RecR</fullName>
    </recommendedName>
</protein>
<name>RECR_THEP3</name>
<sequence length="199" mass="22150">MNYYSTSIAKLIEELSKLPGIGPKTAQRLAFFIINMPLEEVKSLSQAIIDAKEKIKYCRICYNITDTEVCNICSDKERDHSLICVVSHPMDVVAMEKIREYKGVYHVLHGVISPIEGVGPEDIKIKELLDRVKNGNVKEVILATNPDIEGEATAMYIAKLLKPLGIKVTRIAHGVPVGGDLEYTDVVTLSRALEGRREL</sequence>
<comment type="function">
    <text evidence="1">May play a role in DNA repair. It seems to be involved in an RecBC-independent recombinational process of DNA repair. It may act with RecF and RecO.</text>
</comment>
<comment type="similarity">
    <text evidence="1">Belongs to the RecR family.</text>
</comment>
<reference key="1">
    <citation type="submission" date="2008-01" db="EMBL/GenBank/DDBJ databases">
        <title>Complete sequence of Thermoanaerobacter pseudethanolicus 39E.</title>
        <authorList>
            <person name="Copeland A."/>
            <person name="Lucas S."/>
            <person name="Lapidus A."/>
            <person name="Barry K."/>
            <person name="Glavina del Rio T."/>
            <person name="Dalin E."/>
            <person name="Tice H."/>
            <person name="Pitluck S."/>
            <person name="Bruce D."/>
            <person name="Goodwin L."/>
            <person name="Saunders E."/>
            <person name="Brettin T."/>
            <person name="Detter J.C."/>
            <person name="Han C."/>
            <person name="Schmutz J."/>
            <person name="Larimer F."/>
            <person name="Land M."/>
            <person name="Hauser L."/>
            <person name="Kyrpides N."/>
            <person name="Lykidis A."/>
            <person name="Hemme C."/>
            <person name="Fields M.W."/>
            <person name="He Z."/>
            <person name="Zhou J."/>
            <person name="Richardson P."/>
        </authorList>
    </citation>
    <scope>NUCLEOTIDE SEQUENCE [LARGE SCALE GENOMIC DNA]</scope>
    <source>
        <strain>ATCC 33223 / DSM 2355 / 39E</strain>
    </source>
</reference>
<dbReference type="EMBL" id="CP000924">
    <property type="protein sequence ID" value="ABY95820.1"/>
    <property type="molecule type" value="Genomic_DNA"/>
</dbReference>
<dbReference type="RefSeq" id="WP_003869947.1">
    <property type="nucleotide sequence ID" value="NC_010321.1"/>
</dbReference>
<dbReference type="SMR" id="B0K800"/>
<dbReference type="STRING" id="340099.Teth39_2198"/>
<dbReference type="KEGG" id="tpd:Teth39_2198"/>
<dbReference type="eggNOG" id="COG0353">
    <property type="taxonomic scope" value="Bacteria"/>
</dbReference>
<dbReference type="HOGENOM" id="CLU_060739_1_0_9"/>
<dbReference type="Proteomes" id="UP000002156">
    <property type="component" value="Chromosome"/>
</dbReference>
<dbReference type="GO" id="GO:0003677">
    <property type="term" value="F:DNA binding"/>
    <property type="evidence" value="ECO:0007669"/>
    <property type="project" value="UniProtKB-UniRule"/>
</dbReference>
<dbReference type="GO" id="GO:0008270">
    <property type="term" value="F:zinc ion binding"/>
    <property type="evidence" value="ECO:0007669"/>
    <property type="project" value="UniProtKB-KW"/>
</dbReference>
<dbReference type="GO" id="GO:0006310">
    <property type="term" value="P:DNA recombination"/>
    <property type="evidence" value="ECO:0007669"/>
    <property type="project" value="UniProtKB-UniRule"/>
</dbReference>
<dbReference type="GO" id="GO:0006281">
    <property type="term" value="P:DNA repair"/>
    <property type="evidence" value="ECO:0007669"/>
    <property type="project" value="UniProtKB-UniRule"/>
</dbReference>
<dbReference type="CDD" id="cd01025">
    <property type="entry name" value="TOPRIM_recR"/>
    <property type="match status" value="1"/>
</dbReference>
<dbReference type="Gene3D" id="3.30.60.80">
    <property type="match status" value="1"/>
</dbReference>
<dbReference type="Gene3D" id="3.40.1360.10">
    <property type="match status" value="1"/>
</dbReference>
<dbReference type="Gene3D" id="6.10.250.240">
    <property type="match status" value="1"/>
</dbReference>
<dbReference type="Gene3D" id="1.10.8.420">
    <property type="entry name" value="RecR Domain 1"/>
    <property type="match status" value="1"/>
</dbReference>
<dbReference type="HAMAP" id="MF_00017">
    <property type="entry name" value="RecR"/>
    <property type="match status" value="1"/>
</dbReference>
<dbReference type="InterPro" id="IPR000093">
    <property type="entry name" value="DNA_Rcmb_RecR"/>
</dbReference>
<dbReference type="InterPro" id="IPR003583">
    <property type="entry name" value="Hlx-hairpin-Hlx_DNA-bd_motif"/>
</dbReference>
<dbReference type="InterPro" id="IPR023627">
    <property type="entry name" value="Rcmb_RecR"/>
</dbReference>
<dbReference type="InterPro" id="IPR015967">
    <property type="entry name" value="Rcmb_RecR_Znf"/>
</dbReference>
<dbReference type="InterPro" id="IPR006171">
    <property type="entry name" value="TOPRIM_dom"/>
</dbReference>
<dbReference type="InterPro" id="IPR034137">
    <property type="entry name" value="TOPRIM_RecR"/>
</dbReference>
<dbReference type="NCBIfam" id="TIGR00615">
    <property type="entry name" value="recR"/>
    <property type="match status" value="1"/>
</dbReference>
<dbReference type="PANTHER" id="PTHR30446">
    <property type="entry name" value="RECOMBINATION PROTEIN RECR"/>
    <property type="match status" value="1"/>
</dbReference>
<dbReference type="PANTHER" id="PTHR30446:SF0">
    <property type="entry name" value="RECOMBINATION PROTEIN RECR"/>
    <property type="match status" value="1"/>
</dbReference>
<dbReference type="Pfam" id="PF21175">
    <property type="entry name" value="RecR_C"/>
    <property type="match status" value="1"/>
</dbReference>
<dbReference type="Pfam" id="PF21176">
    <property type="entry name" value="RecR_HhH"/>
    <property type="match status" value="1"/>
</dbReference>
<dbReference type="Pfam" id="PF02132">
    <property type="entry name" value="RecR_ZnF"/>
    <property type="match status" value="1"/>
</dbReference>
<dbReference type="Pfam" id="PF13662">
    <property type="entry name" value="Toprim_4"/>
    <property type="match status" value="1"/>
</dbReference>
<dbReference type="SMART" id="SM00278">
    <property type="entry name" value="HhH1"/>
    <property type="match status" value="1"/>
</dbReference>
<dbReference type="SMART" id="SM00493">
    <property type="entry name" value="TOPRIM"/>
    <property type="match status" value="1"/>
</dbReference>
<dbReference type="SUPFAM" id="SSF111304">
    <property type="entry name" value="Recombination protein RecR"/>
    <property type="match status" value="1"/>
</dbReference>
<dbReference type="PROSITE" id="PS01300">
    <property type="entry name" value="RECR"/>
    <property type="match status" value="1"/>
</dbReference>
<dbReference type="PROSITE" id="PS50880">
    <property type="entry name" value="TOPRIM"/>
    <property type="match status" value="1"/>
</dbReference>
<evidence type="ECO:0000255" key="1">
    <source>
        <dbReference type="HAMAP-Rule" id="MF_00017"/>
    </source>
</evidence>
<keyword id="KW-0227">DNA damage</keyword>
<keyword id="KW-0233">DNA recombination</keyword>
<keyword id="KW-0234">DNA repair</keyword>
<keyword id="KW-0479">Metal-binding</keyword>
<keyword id="KW-1185">Reference proteome</keyword>
<keyword id="KW-0862">Zinc</keyword>
<keyword id="KW-0863">Zinc-finger</keyword>
<gene>
    <name evidence="1" type="primary">recR</name>
    <name type="ordered locus">Teth39_2198</name>
</gene>